<feature type="chain" id="PRO_0000400327" description="ATP-dependent zinc metalloprotease FtsH">
    <location>
        <begin position="1"/>
        <end position="644"/>
    </location>
</feature>
<feature type="topological domain" description="Cytoplasmic" evidence="1">
    <location>
        <begin position="1"/>
        <end position="13"/>
    </location>
</feature>
<feature type="transmembrane region" description="Helical" evidence="1">
    <location>
        <begin position="14"/>
        <end position="34"/>
    </location>
</feature>
<feature type="topological domain" description="Extracellular" evidence="1">
    <location>
        <begin position="35"/>
        <end position="117"/>
    </location>
</feature>
<feature type="transmembrane region" description="Helical" evidence="1">
    <location>
        <begin position="118"/>
        <end position="138"/>
    </location>
</feature>
<feature type="topological domain" description="Cytoplasmic" evidence="1">
    <location>
        <begin position="139"/>
        <end position="644"/>
    </location>
</feature>
<feature type="active site" evidence="1">
    <location>
        <position position="446"/>
    </location>
</feature>
<feature type="binding site" evidence="1">
    <location>
        <begin position="224"/>
        <end position="231"/>
    </location>
    <ligand>
        <name>ATP</name>
        <dbReference type="ChEBI" id="CHEBI:30616"/>
    </ligand>
</feature>
<feature type="binding site" evidence="1">
    <location>
        <position position="445"/>
    </location>
    <ligand>
        <name>Zn(2+)</name>
        <dbReference type="ChEBI" id="CHEBI:29105"/>
        <note>catalytic</note>
    </ligand>
</feature>
<feature type="binding site" evidence="1">
    <location>
        <position position="449"/>
    </location>
    <ligand>
        <name>Zn(2+)</name>
        <dbReference type="ChEBI" id="CHEBI:29105"/>
        <note>catalytic</note>
    </ligand>
</feature>
<feature type="binding site" evidence="1">
    <location>
        <position position="522"/>
    </location>
    <ligand>
        <name>Zn(2+)</name>
        <dbReference type="ChEBI" id="CHEBI:29105"/>
        <note>catalytic</note>
    </ligand>
</feature>
<sequence length="644" mass="70420">MANNDNKHRRSMSMLLYIAVAIFVYLLLSNTLLPGLLRQQIQTVSYSEFLNKIESNEVTKVDLNTGNRNIRFTTGSGDSEKIFETTQFPNDSTLVQTLREHKVDFSASIPDNSANMLMYALIQYGIPLIIFLGIGFFINRSLKRAMGDDGPSMNFGGGFGGLGGNLGRSSAKEIKGEDTGITFKDVAGQEEAKESMQEIVSFLKTPDKYKEIGARCPRGALLVGPPGTGKTLIAKAVAGEAGVPFFQIAGSEFVEMFVGRGAAKVRDLFKQANEKAPCIIFIDEIDAVGKRRDASLNSNDEREQTLNQLLSEMDGFDNHKGIVVLAATNRPETLDKALLRPGRFDRRIPVELPDLKGREAVLQIHANDVKMEPGVDLSIVAKSTPGASGADLANIINEAALRAVRFGRRRVTTEDLTESVDVVIAGAKKKNSVLSEHEKDVVAYHETGHAIVGAIQKNDAPVTKITIVPRTSGALGFTMQVEDDERYLMSKSQAMDEIAVLCGGRAAEELIFGEMTNGASNDIERATAIARAMVTQYGMSDKLGMVTLSQQQSRYLGGGSSLTCSEATAEEIDAEVRRIVEEGHQRALQTLKENRFKLHEIAHYLQKKETITGEEFMNILKRENTFAPVDKNINDEGSSTPSEE</sequence>
<comment type="function">
    <text evidence="1">Acts as a processive, ATP-dependent zinc metallopeptidase for both cytoplasmic and membrane proteins. Plays a role in the quality control of integral membrane proteins.</text>
</comment>
<comment type="cofactor">
    <cofactor evidence="1">
        <name>Zn(2+)</name>
        <dbReference type="ChEBI" id="CHEBI:29105"/>
    </cofactor>
    <text evidence="1">Binds 1 zinc ion per subunit.</text>
</comment>
<comment type="subunit">
    <text evidence="1">Homohexamer.</text>
</comment>
<comment type="subcellular location">
    <subcellularLocation>
        <location evidence="1">Cell membrane</location>
        <topology evidence="1">Multi-pass membrane protein</topology>
        <orientation evidence="1">Cytoplasmic side</orientation>
    </subcellularLocation>
</comment>
<comment type="similarity">
    <text evidence="1">In the central section; belongs to the AAA ATPase family.</text>
</comment>
<comment type="similarity">
    <text evidence="1">In the C-terminal section; belongs to the peptidase M41 family.</text>
</comment>
<reference key="1">
    <citation type="journal article" date="2009" name="Stand. Genomic Sci.">
        <title>Complete genome sequence of Atopobium parvulum type strain (IPP 1246).</title>
        <authorList>
            <person name="Copeland A."/>
            <person name="Sikorski J."/>
            <person name="Lapidus A."/>
            <person name="Nolan M."/>
            <person name="Del Rio T.G."/>
            <person name="Lucas S."/>
            <person name="Chen F."/>
            <person name="Tice H."/>
            <person name="Pitluck S."/>
            <person name="Cheng J.F."/>
            <person name="Pukall R."/>
            <person name="Chertkov O."/>
            <person name="Brettin T."/>
            <person name="Han C."/>
            <person name="Detter J.C."/>
            <person name="Kuske C."/>
            <person name="Bruce D."/>
            <person name="Goodwin L."/>
            <person name="Ivanova N."/>
            <person name="Mavromatis K."/>
            <person name="Mikhailova N."/>
            <person name="Chen A."/>
            <person name="Palaniappan K."/>
            <person name="Chain P."/>
            <person name="Rohde M."/>
            <person name="Goker M."/>
            <person name="Bristow J."/>
            <person name="Eisen J.A."/>
            <person name="Markowitz V."/>
            <person name="Hugenholtz P."/>
            <person name="Kyrpides N.C."/>
            <person name="Klenk H.P."/>
            <person name="Detter J.C."/>
        </authorList>
    </citation>
    <scope>NUCLEOTIDE SEQUENCE [LARGE SCALE GENOMIC DNA]</scope>
    <source>
        <strain>ATCC 33793 / DSM 20469 / CCUG 32760 / JCM 10300 / KCTC 3663 / VPI 0546 / 1246</strain>
    </source>
</reference>
<gene>
    <name evidence="1" type="primary">ftsH</name>
    <name type="ordered locus">Apar_0842</name>
</gene>
<name>FTSH_LANP1</name>
<protein>
    <recommendedName>
        <fullName evidence="1">ATP-dependent zinc metalloprotease FtsH</fullName>
        <ecNumber evidence="1">3.4.24.-</ecNumber>
    </recommendedName>
</protein>
<accession>C8W731</accession>
<evidence type="ECO:0000255" key="1">
    <source>
        <dbReference type="HAMAP-Rule" id="MF_01458"/>
    </source>
</evidence>
<proteinExistence type="inferred from homology"/>
<dbReference type="EC" id="3.4.24.-" evidence="1"/>
<dbReference type="EMBL" id="CP001721">
    <property type="protein sequence ID" value="ACV51271.1"/>
    <property type="molecule type" value="Genomic_DNA"/>
</dbReference>
<dbReference type="RefSeq" id="WP_012808928.1">
    <property type="nucleotide sequence ID" value="NC_013203.1"/>
</dbReference>
<dbReference type="SMR" id="C8W731"/>
<dbReference type="STRING" id="521095.Apar_0842"/>
<dbReference type="GeneID" id="84806368"/>
<dbReference type="KEGG" id="apv:Apar_0842"/>
<dbReference type="eggNOG" id="COG0465">
    <property type="taxonomic scope" value="Bacteria"/>
</dbReference>
<dbReference type="HOGENOM" id="CLU_000688_16_2_11"/>
<dbReference type="Proteomes" id="UP000000960">
    <property type="component" value="Chromosome"/>
</dbReference>
<dbReference type="GO" id="GO:0005886">
    <property type="term" value="C:plasma membrane"/>
    <property type="evidence" value="ECO:0007669"/>
    <property type="project" value="UniProtKB-SubCell"/>
</dbReference>
<dbReference type="GO" id="GO:0005524">
    <property type="term" value="F:ATP binding"/>
    <property type="evidence" value="ECO:0007669"/>
    <property type="project" value="UniProtKB-UniRule"/>
</dbReference>
<dbReference type="GO" id="GO:0016887">
    <property type="term" value="F:ATP hydrolysis activity"/>
    <property type="evidence" value="ECO:0007669"/>
    <property type="project" value="UniProtKB-UniRule"/>
</dbReference>
<dbReference type="GO" id="GO:0004176">
    <property type="term" value="F:ATP-dependent peptidase activity"/>
    <property type="evidence" value="ECO:0007669"/>
    <property type="project" value="InterPro"/>
</dbReference>
<dbReference type="GO" id="GO:0004222">
    <property type="term" value="F:metalloendopeptidase activity"/>
    <property type="evidence" value="ECO:0007669"/>
    <property type="project" value="InterPro"/>
</dbReference>
<dbReference type="GO" id="GO:0008270">
    <property type="term" value="F:zinc ion binding"/>
    <property type="evidence" value="ECO:0007669"/>
    <property type="project" value="UniProtKB-UniRule"/>
</dbReference>
<dbReference type="GO" id="GO:0030163">
    <property type="term" value="P:protein catabolic process"/>
    <property type="evidence" value="ECO:0007669"/>
    <property type="project" value="UniProtKB-UniRule"/>
</dbReference>
<dbReference type="GO" id="GO:0006508">
    <property type="term" value="P:proteolysis"/>
    <property type="evidence" value="ECO:0007669"/>
    <property type="project" value="UniProtKB-KW"/>
</dbReference>
<dbReference type="CDD" id="cd19501">
    <property type="entry name" value="RecA-like_FtsH"/>
    <property type="match status" value="1"/>
</dbReference>
<dbReference type="FunFam" id="1.10.8.60:FF:000001">
    <property type="entry name" value="ATP-dependent zinc metalloprotease FtsH"/>
    <property type="match status" value="1"/>
</dbReference>
<dbReference type="FunFam" id="1.20.58.760:FF:000001">
    <property type="entry name" value="ATP-dependent zinc metalloprotease FtsH"/>
    <property type="match status" value="1"/>
</dbReference>
<dbReference type="FunFam" id="3.40.50.300:FF:000001">
    <property type="entry name" value="ATP-dependent zinc metalloprotease FtsH"/>
    <property type="match status" value="1"/>
</dbReference>
<dbReference type="Gene3D" id="1.10.8.60">
    <property type="match status" value="1"/>
</dbReference>
<dbReference type="Gene3D" id="3.30.720.210">
    <property type="match status" value="1"/>
</dbReference>
<dbReference type="Gene3D" id="3.40.50.300">
    <property type="entry name" value="P-loop containing nucleotide triphosphate hydrolases"/>
    <property type="match status" value="1"/>
</dbReference>
<dbReference type="Gene3D" id="1.20.58.760">
    <property type="entry name" value="Peptidase M41"/>
    <property type="match status" value="1"/>
</dbReference>
<dbReference type="HAMAP" id="MF_01458">
    <property type="entry name" value="FtsH"/>
    <property type="match status" value="1"/>
</dbReference>
<dbReference type="InterPro" id="IPR003593">
    <property type="entry name" value="AAA+_ATPase"/>
</dbReference>
<dbReference type="InterPro" id="IPR041569">
    <property type="entry name" value="AAA_lid_3"/>
</dbReference>
<dbReference type="InterPro" id="IPR003959">
    <property type="entry name" value="ATPase_AAA_core"/>
</dbReference>
<dbReference type="InterPro" id="IPR003960">
    <property type="entry name" value="ATPase_AAA_CS"/>
</dbReference>
<dbReference type="InterPro" id="IPR005936">
    <property type="entry name" value="FtsH"/>
</dbReference>
<dbReference type="InterPro" id="IPR027417">
    <property type="entry name" value="P-loop_NTPase"/>
</dbReference>
<dbReference type="InterPro" id="IPR011546">
    <property type="entry name" value="Pept_M41_FtsH_extracell"/>
</dbReference>
<dbReference type="InterPro" id="IPR000642">
    <property type="entry name" value="Peptidase_M41"/>
</dbReference>
<dbReference type="InterPro" id="IPR037219">
    <property type="entry name" value="Peptidase_M41-like"/>
</dbReference>
<dbReference type="NCBIfam" id="TIGR01241">
    <property type="entry name" value="FtsH_fam"/>
    <property type="match status" value="1"/>
</dbReference>
<dbReference type="PANTHER" id="PTHR23076:SF113">
    <property type="entry name" value="ATP-DEPENDENT ZINC METALLOPROTEASE FTSH 1, CHLOROPLASTIC-RELATED"/>
    <property type="match status" value="1"/>
</dbReference>
<dbReference type="PANTHER" id="PTHR23076">
    <property type="entry name" value="METALLOPROTEASE M41 FTSH"/>
    <property type="match status" value="1"/>
</dbReference>
<dbReference type="Pfam" id="PF00004">
    <property type="entry name" value="AAA"/>
    <property type="match status" value="1"/>
</dbReference>
<dbReference type="Pfam" id="PF17862">
    <property type="entry name" value="AAA_lid_3"/>
    <property type="match status" value="1"/>
</dbReference>
<dbReference type="Pfam" id="PF06480">
    <property type="entry name" value="FtsH_ext"/>
    <property type="match status" value="1"/>
</dbReference>
<dbReference type="Pfam" id="PF01434">
    <property type="entry name" value="Peptidase_M41"/>
    <property type="match status" value="1"/>
</dbReference>
<dbReference type="SMART" id="SM00382">
    <property type="entry name" value="AAA"/>
    <property type="match status" value="1"/>
</dbReference>
<dbReference type="SUPFAM" id="SSF140990">
    <property type="entry name" value="FtsH protease domain-like"/>
    <property type="match status" value="1"/>
</dbReference>
<dbReference type="SUPFAM" id="SSF52540">
    <property type="entry name" value="P-loop containing nucleoside triphosphate hydrolases"/>
    <property type="match status" value="1"/>
</dbReference>
<dbReference type="PROSITE" id="PS00674">
    <property type="entry name" value="AAA"/>
    <property type="match status" value="1"/>
</dbReference>
<keyword id="KW-0067">ATP-binding</keyword>
<keyword id="KW-1003">Cell membrane</keyword>
<keyword id="KW-0378">Hydrolase</keyword>
<keyword id="KW-0472">Membrane</keyword>
<keyword id="KW-0479">Metal-binding</keyword>
<keyword id="KW-0482">Metalloprotease</keyword>
<keyword id="KW-0547">Nucleotide-binding</keyword>
<keyword id="KW-0645">Protease</keyword>
<keyword id="KW-1185">Reference proteome</keyword>
<keyword id="KW-0812">Transmembrane</keyword>
<keyword id="KW-1133">Transmembrane helix</keyword>
<keyword id="KW-0862">Zinc</keyword>
<organism>
    <name type="scientific">Lancefieldella parvula (strain ATCC 33793 / DSM 20469 / CCUG 32760 / JCM 10300 / KCTC 3663 / VPI 0546 / 1246)</name>
    <name type="common">Atopobium parvulum</name>
    <dbReference type="NCBI Taxonomy" id="521095"/>
    <lineage>
        <taxon>Bacteria</taxon>
        <taxon>Bacillati</taxon>
        <taxon>Actinomycetota</taxon>
        <taxon>Coriobacteriia</taxon>
        <taxon>Coriobacteriales</taxon>
        <taxon>Atopobiaceae</taxon>
        <taxon>Lancefieldella</taxon>
    </lineage>
</organism>